<evidence type="ECO:0000255" key="1"/>
<evidence type="ECO:0000255" key="2">
    <source>
        <dbReference type="HAMAP-Rule" id="MF_00309"/>
    </source>
</evidence>
<evidence type="ECO:0000305" key="3"/>
<name>AATA_PYRFU</name>
<accession>Q8U4A6</accession>
<gene>
    <name evidence="2" type="primary">atpA</name>
    <name type="ordered locus">PF0182</name>
</gene>
<sequence>MPAKGRIIRVTGPLVIADGMKGAKMYEVVRVGELGLIGEIIRLEGDKAVIQVYEETAGLKPGEPVEGTGSSLSVELGPGLLTSIYDGIQRPLEVLREKSGHFIARGISAPALPRDKKWHFTPKVKVGDKVVGGDIIGEVPETSIIVHKIMVPPGIEGEIVEIADEGEYTIEEVIAKVKTPSGEIKELKMYQRWPVRVKRPYKEKLPPEVPLVTGQRVIDTFFPQAKGGTAAIPGPFGSGKCVDGDTLILTKEFGLIKIKDLYEKLDGKGRKTVEGNEEWTELEEPITVYGYKNGKIVEIKATHVYKGASSGMIEIKTRTGRKIKVTPIHKLFTGRVTKDGLVLEEVMAMHIKPGDRIAVVKKIDGGEYVKLDTSSVTKIKVPEVLNEELAEFLGYVIGDGTLKPRTVAIYNNDESLLKRANFLAMKLFGVSGKIVQERTVKALLIHSKYLVDFLKKLGIPGNKKARTWKVPKELLLSPPSVVKAFINAYIACDGYYNKEKGEIEIVTASEEGAYGLTYLLAKLGIYATIRRKTINGREYYRVVISGKANLEKLGVKREARGYTSIDVVPVDVESIYEALGRPYSELKKEGIEIHNYLSGENMSYETFRKFAKVVGLEEIAENHLQHILFDEVVEVNYISEPQEVYDITTETHNFVGGNMPTLLHNTVTQHQLAKWSDAQVVVYIGCGERGNEMTDVLEEFPKLKDPNTGKPLMERTVLIANTSNMPVAAREASIYTGITIAEYFRDMGYDVALMADSTSRWAEALREISGRLEEMPGEEGYPAYLASRLAEFYERAGRVVTLGSDYRVGSVSVIGAVSPPGGDFSEPVVQNTLRVVKVFWALDADLARRRHFPAINWLTSYSLYVDAVQDWWHKNVDPEWRRMRDKAMELLQKEAELQEIVRIVGPDALPERERAILLVARMLREDYLQQDAFDEVDTYCPPQKQVTMMRVLMTFYERTMDAISRGVPLEEIAKLPVREEIGRMKFEPDIEKIRALIDKTNEQFDELLKKYGA</sequence>
<proteinExistence type="inferred from homology"/>
<keyword id="KW-0066">ATP synthesis</keyword>
<keyword id="KW-0067">ATP-binding</keyword>
<keyword id="KW-0068">Autocatalytic cleavage</keyword>
<keyword id="KW-1003">Cell membrane</keyword>
<keyword id="KW-0255">Endonuclease</keyword>
<keyword id="KW-0375">Hydrogen ion transport</keyword>
<keyword id="KW-0378">Hydrolase</keyword>
<keyword id="KW-0404">Intron homing</keyword>
<keyword id="KW-0406">Ion transport</keyword>
<keyword id="KW-0472">Membrane</keyword>
<keyword id="KW-0540">Nuclease</keyword>
<keyword id="KW-0547">Nucleotide-binding</keyword>
<keyword id="KW-0651">Protein splicing</keyword>
<keyword id="KW-1185">Reference proteome</keyword>
<keyword id="KW-1278">Translocase</keyword>
<keyword id="KW-0813">Transport</keyword>
<reference key="1">
    <citation type="journal article" date="1999" name="Genetics">
        <title>Divergence of the hyperthermophilic archaea Pyrococcus furiosus and P. horikoshii inferred from complete genomic sequences.</title>
        <authorList>
            <person name="Maeder D.L."/>
            <person name="Weiss R.B."/>
            <person name="Dunn D.M."/>
            <person name="Cherry J.L."/>
            <person name="Gonzalez J.M."/>
            <person name="DiRuggiero J."/>
            <person name="Robb F.T."/>
        </authorList>
    </citation>
    <scope>NUCLEOTIDE SEQUENCE [LARGE SCALE GENOMIC DNA]</scope>
    <source>
        <strain>ATCC 43587 / DSM 3638 / JCM 8422 / Vc1</strain>
    </source>
</reference>
<protein>
    <recommendedName>
        <fullName evidence="2">A-type ATP synthase subunit A</fullName>
        <ecNumber evidence="2">7.1.2.2</ecNumber>
    </recommendedName>
    <component>
        <recommendedName>
            <fullName>Endonuclease PI-Pfu2</fullName>
            <ecNumber>3.1.-.-</ecNumber>
        </recommendedName>
        <alternativeName>
            <fullName>Pfu AtpA intein</fullName>
        </alternativeName>
        <alternativeName>
            <fullName>Pfu VMA intein</fullName>
        </alternativeName>
    </component>
</protein>
<organism>
    <name type="scientific">Pyrococcus furiosus (strain ATCC 43587 / DSM 3638 / JCM 8422 / Vc1)</name>
    <dbReference type="NCBI Taxonomy" id="186497"/>
    <lineage>
        <taxon>Archaea</taxon>
        <taxon>Methanobacteriati</taxon>
        <taxon>Methanobacteriota</taxon>
        <taxon>Thermococci</taxon>
        <taxon>Thermococcales</taxon>
        <taxon>Thermococcaceae</taxon>
        <taxon>Pyrococcus</taxon>
    </lineage>
</organism>
<comment type="function">
    <text evidence="2">Component of the A-type ATP synthase that produces ATP from ADP in the presence of a proton gradient across the membrane. The A chain is the catalytic subunit.</text>
</comment>
<comment type="catalytic activity">
    <reaction evidence="2">
        <text>ATP + H2O + 4 H(+)(in) = ADP + phosphate + 5 H(+)(out)</text>
        <dbReference type="Rhea" id="RHEA:57720"/>
        <dbReference type="ChEBI" id="CHEBI:15377"/>
        <dbReference type="ChEBI" id="CHEBI:15378"/>
        <dbReference type="ChEBI" id="CHEBI:30616"/>
        <dbReference type="ChEBI" id="CHEBI:43474"/>
        <dbReference type="ChEBI" id="CHEBI:456216"/>
        <dbReference type="EC" id="7.1.2.2"/>
    </reaction>
</comment>
<comment type="subunit">
    <text evidence="2">Has multiple subunits with at least A(3), B(3), C, D, E, F, H, I and proteolipid K(x).</text>
</comment>
<comment type="subcellular location">
    <subcellularLocation>
        <location evidence="2">Cell membrane</location>
        <topology evidence="2">Peripheral membrane protein</topology>
    </subcellularLocation>
</comment>
<comment type="PTM">
    <text evidence="3">This protein undergoes a protein self splicing that involves a post-translational excision of the VDE intervening region (intein) followed by peptide ligation.</text>
</comment>
<comment type="miscellaneous">
    <text>The intein interrupts the ATP-binding site.</text>
</comment>
<comment type="similarity">
    <text evidence="2">Belongs to the ATPase alpha/beta chains family.</text>
</comment>
<dbReference type="EC" id="7.1.2.2" evidence="2"/>
<dbReference type="EC" id="3.1.-.-"/>
<dbReference type="EMBL" id="AE009950">
    <property type="protein sequence ID" value="AAL80306.1"/>
    <property type="molecule type" value="Genomic_DNA"/>
</dbReference>
<dbReference type="RefSeq" id="WP_011011295.1">
    <property type="nucleotide sequence ID" value="NZ_CP023154.1"/>
</dbReference>
<dbReference type="SMR" id="Q8U4A6"/>
<dbReference type="STRING" id="186497.PF0182"/>
<dbReference type="PaxDb" id="186497-PF0182"/>
<dbReference type="KEGG" id="pfu:PF0182"/>
<dbReference type="PATRIC" id="fig|186497.12.peg.189"/>
<dbReference type="eggNOG" id="arCOG00868">
    <property type="taxonomic scope" value="Archaea"/>
</dbReference>
<dbReference type="eggNOG" id="arCOG03154">
    <property type="taxonomic scope" value="Archaea"/>
</dbReference>
<dbReference type="HOGENOM" id="CLU_008162_1_0_2"/>
<dbReference type="OrthoDB" id="115235at2157"/>
<dbReference type="PhylomeDB" id="Q8U4A6"/>
<dbReference type="Proteomes" id="UP000001013">
    <property type="component" value="Chromosome"/>
</dbReference>
<dbReference type="GO" id="GO:0005886">
    <property type="term" value="C:plasma membrane"/>
    <property type="evidence" value="ECO:0007669"/>
    <property type="project" value="UniProtKB-SubCell"/>
</dbReference>
<dbReference type="GO" id="GO:0005524">
    <property type="term" value="F:ATP binding"/>
    <property type="evidence" value="ECO:0007669"/>
    <property type="project" value="UniProtKB-UniRule"/>
</dbReference>
<dbReference type="GO" id="GO:0004519">
    <property type="term" value="F:endonuclease activity"/>
    <property type="evidence" value="ECO:0007669"/>
    <property type="project" value="UniProtKB-KW"/>
</dbReference>
<dbReference type="GO" id="GO:0046933">
    <property type="term" value="F:proton-transporting ATP synthase activity, rotational mechanism"/>
    <property type="evidence" value="ECO:0007669"/>
    <property type="project" value="UniProtKB-UniRule"/>
</dbReference>
<dbReference type="GO" id="GO:0046961">
    <property type="term" value="F:proton-transporting ATPase activity, rotational mechanism"/>
    <property type="evidence" value="ECO:0007669"/>
    <property type="project" value="InterPro"/>
</dbReference>
<dbReference type="GO" id="GO:0016539">
    <property type="term" value="P:intein-mediated protein splicing"/>
    <property type="evidence" value="ECO:0007669"/>
    <property type="project" value="InterPro"/>
</dbReference>
<dbReference type="GO" id="GO:0006314">
    <property type="term" value="P:intron homing"/>
    <property type="evidence" value="ECO:0007669"/>
    <property type="project" value="UniProtKB-KW"/>
</dbReference>
<dbReference type="GO" id="GO:0042777">
    <property type="term" value="P:proton motive force-driven plasma membrane ATP synthesis"/>
    <property type="evidence" value="ECO:0007669"/>
    <property type="project" value="UniProtKB-UniRule"/>
</dbReference>
<dbReference type="CDD" id="cd18111">
    <property type="entry name" value="ATP-synt_V_A-type_alpha_C"/>
    <property type="match status" value="1"/>
</dbReference>
<dbReference type="CDD" id="cd18119">
    <property type="entry name" value="ATP-synt_V_A-type_alpha_N"/>
    <property type="match status" value="1"/>
</dbReference>
<dbReference type="CDD" id="cd00081">
    <property type="entry name" value="Hint"/>
    <property type="match status" value="1"/>
</dbReference>
<dbReference type="CDD" id="cd01134">
    <property type="entry name" value="V_A-ATPase_A"/>
    <property type="match status" value="1"/>
</dbReference>
<dbReference type="FunFam" id="1.10.1140.10:FF:000002">
    <property type="entry name" value="V-type proton ATPase catalytic subunit A"/>
    <property type="match status" value="1"/>
</dbReference>
<dbReference type="FunFam" id="2.40.30.20:FF:000002">
    <property type="entry name" value="V-type proton ATPase catalytic subunit A"/>
    <property type="match status" value="1"/>
</dbReference>
<dbReference type="FunFam" id="2.40.50.100:FF:000008">
    <property type="entry name" value="V-type proton ATPase catalytic subunit A"/>
    <property type="match status" value="1"/>
</dbReference>
<dbReference type="Gene3D" id="2.40.30.20">
    <property type="match status" value="1"/>
</dbReference>
<dbReference type="Gene3D" id="2.40.50.100">
    <property type="match status" value="1"/>
</dbReference>
<dbReference type="Gene3D" id="1.10.1140.10">
    <property type="entry name" value="Bovine Mitochondrial F1-atpase, Atp Synthase Beta Chain, Chain D, domain 3"/>
    <property type="match status" value="1"/>
</dbReference>
<dbReference type="Gene3D" id="2.170.16.10">
    <property type="entry name" value="Hedgehog/Intein (Hint) domain"/>
    <property type="match status" value="2"/>
</dbReference>
<dbReference type="Gene3D" id="3.10.28.10">
    <property type="entry name" value="Homing endonucleases"/>
    <property type="match status" value="1"/>
</dbReference>
<dbReference type="Gene3D" id="3.40.50.300">
    <property type="entry name" value="P-loop containing nucleotide triphosphate hydrolases"/>
    <property type="match status" value="1"/>
</dbReference>
<dbReference type="HAMAP" id="MF_00309">
    <property type="entry name" value="ATP_synth_A_arch"/>
    <property type="match status" value="1"/>
</dbReference>
<dbReference type="InterPro" id="IPR055190">
    <property type="entry name" value="ATP-synt_VA_C"/>
</dbReference>
<dbReference type="InterPro" id="IPR031686">
    <property type="entry name" value="ATP-synth_a_Xtn"/>
</dbReference>
<dbReference type="InterPro" id="IPR023366">
    <property type="entry name" value="ATP_synth_asu-like_sf"/>
</dbReference>
<dbReference type="InterPro" id="IPR020003">
    <property type="entry name" value="ATPase_a/bsu_AS"/>
</dbReference>
<dbReference type="InterPro" id="IPR004100">
    <property type="entry name" value="ATPase_F1/V1/A1_a/bsu_N"/>
</dbReference>
<dbReference type="InterPro" id="IPR036121">
    <property type="entry name" value="ATPase_F1/V1/A1_a/bsu_N_sf"/>
</dbReference>
<dbReference type="InterPro" id="IPR000194">
    <property type="entry name" value="ATPase_F1/V1/A1_a/bsu_nucl-bd"/>
</dbReference>
<dbReference type="InterPro" id="IPR024034">
    <property type="entry name" value="ATPase_F1/V1_b/a_C"/>
</dbReference>
<dbReference type="InterPro" id="IPR003586">
    <property type="entry name" value="Hint_dom_C"/>
</dbReference>
<dbReference type="InterPro" id="IPR003587">
    <property type="entry name" value="Hint_dom_N"/>
</dbReference>
<dbReference type="InterPro" id="IPR036844">
    <property type="entry name" value="Hint_dom_sf"/>
</dbReference>
<dbReference type="InterPro" id="IPR027434">
    <property type="entry name" value="Homing_endonucl"/>
</dbReference>
<dbReference type="InterPro" id="IPR006142">
    <property type="entry name" value="INTEIN"/>
</dbReference>
<dbReference type="InterPro" id="IPR030934">
    <property type="entry name" value="Intein_C"/>
</dbReference>
<dbReference type="InterPro" id="IPR004042">
    <property type="entry name" value="Intein_endonuc_central"/>
</dbReference>
<dbReference type="InterPro" id="IPR006141">
    <property type="entry name" value="Intein_N"/>
</dbReference>
<dbReference type="InterPro" id="IPR004860">
    <property type="entry name" value="LAGLIDADG_dom"/>
</dbReference>
<dbReference type="InterPro" id="IPR027417">
    <property type="entry name" value="P-loop_NTPase"/>
</dbReference>
<dbReference type="InterPro" id="IPR022878">
    <property type="entry name" value="V-ATPase_asu"/>
</dbReference>
<dbReference type="NCBIfam" id="TIGR01443">
    <property type="entry name" value="intein_Cterm"/>
    <property type="match status" value="1"/>
</dbReference>
<dbReference type="NCBIfam" id="TIGR01445">
    <property type="entry name" value="intein_Nterm"/>
    <property type="match status" value="1"/>
</dbReference>
<dbReference type="NCBIfam" id="NF003220">
    <property type="entry name" value="PRK04192.1"/>
    <property type="match status" value="1"/>
</dbReference>
<dbReference type="NCBIfam" id="NF011287">
    <property type="entry name" value="PRK14698.1"/>
    <property type="match status" value="1"/>
</dbReference>
<dbReference type="PANTHER" id="PTHR43607:SF1">
    <property type="entry name" value="H(+)-TRANSPORTING TWO-SECTOR ATPASE"/>
    <property type="match status" value="1"/>
</dbReference>
<dbReference type="PANTHER" id="PTHR43607">
    <property type="entry name" value="V-TYPE PROTON ATPASE CATALYTIC SUBUNIT A"/>
    <property type="match status" value="1"/>
</dbReference>
<dbReference type="Pfam" id="PF00006">
    <property type="entry name" value="ATP-synt_ab"/>
    <property type="match status" value="1"/>
</dbReference>
<dbReference type="Pfam" id="PF02874">
    <property type="entry name" value="ATP-synt_ab_N"/>
    <property type="match status" value="1"/>
</dbReference>
<dbReference type="Pfam" id="PF16886">
    <property type="entry name" value="ATP-synt_ab_Xtn"/>
    <property type="match status" value="1"/>
</dbReference>
<dbReference type="Pfam" id="PF22919">
    <property type="entry name" value="ATP-synt_VA_C"/>
    <property type="match status" value="1"/>
</dbReference>
<dbReference type="Pfam" id="PF14890">
    <property type="entry name" value="Intein_splicing"/>
    <property type="match status" value="1"/>
</dbReference>
<dbReference type="Pfam" id="PF14528">
    <property type="entry name" value="LAGLIDADG_3"/>
    <property type="match status" value="2"/>
</dbReference>
<dbReference type="PRINTS" id="PR00379">
    <property type="entry name" value="INTEIN"/>
</dbReference>
<dbReference type="SMART" id="SM00305">
    <property type="entry name" value="HintC"/>
    <property type="match status" value="1"/>
</dbReference>
<dbReference type="SMART" id="SM00306">
    <property type="entry name" value="HintN"/>
    <property type="match status" value="1"/>
</dbReference>
<dbReference type="SUPFAM" id="SSF47917">
    <property type="entry name" value="C-terminal domain of alpha and beta subunits of F1 ATP synthase"/>
    <property type="match status" value="1"/>
</dbReference>
<dbReference type="SUPFAM" id="SSF51294">
    <property type="entry name" value="Hedgehog/intein (Hint) domain"/>
    <property type="match status" value="1"/>
</dbReference>
<dbReference type="SUPFAM" id="SSF55608">
    <property type="entry name" value="Homing endonucleases"/>
    <property type="match status" value="1"/>
</dbReference>
<dbReference type="SUPFAM" id="SSF50615">
    <property type="entry name" value="N-terminal domain of alpha and beta subunits of F1 ATP synthase"/>
    <property type="match status" value="1"/>
</dbReference>
<dbReference type="SUPFAM" id="SSF52540">
    <property type="entry name" value="P-loop containing nucleoside triphosphate hydrolases"/>
    <property type="match status" value="2"/>
</dbReference>
<dbReference type="PROSITE" id="PS00152">
    <property type="entry name" value="ATPASE_ALPHA_BETA"/>
    <property type="match status" value="1"/>
</dbReference>
<dbReference type="PROSITE" id="PS50818">
    <property type="entry name" value="INTEIN_C_TER"/>
    <property type="match status" value="1"/>
</dbReference>
<dbReference type="PROSITE" id="PS50819">
    <property type="entry name" value="INTEIN_ENDONUCLEASE"/>
    <property type="match status" value="1"/>
</dbReference>
<dbReference type="PROSITE" id="PS50817">
    <property type="entry name" value="INTEIN_N_TER"/>
    <property type="match status" value="1"/>
</dbReference>
<feature type="chain" id="PRO_0000002464" description="A-type ATP synthase subunit A, 1st part" evidence="1">
    <location>
        <begin position="1"/>
        <end position="240"/>
    </location>
</feature>
<feature type="chain" id="PRO_0000002465" description="Endonuclease PI-Pfu2" evidence="1">
    <location>
        <begin position="241"/>
        <end position="665"/>
    </location>
</feature>
<feature type="chain" id="PRO_0000002466" description="A-type ATP synthase subunit A, 2nd part" evidence="1">
    <location>
        <begin position="666"/>
        <end position="1013"/>
    </location>
</feature>
<feature type="domain" description="DOD-type homing endonuclease">
    <location>
        <begin position="392"/>
        <end position="525"/>
    </location>
</feature>